<name>TDXH_AQUAE</name>
<feature type="chain" id="PRO_0000135175" description="Peroxiredoxin">
    <location>
        <begin position="1"/>
        <end position="222"/>
    </location>
</feature>
<feature type="domain" description="Thioredoxin" evidence="1">
    <location>
        <begin position="7"/>
        <end position="163"/>
    </location>
</feature>
<feature type="active site" description="Cysteine sulfenic acid (-SOH) intermediate" evidence="1">
    <location>
        <position position="49"/>
    </location>
</feature>
<feature type="binding site" evidence="1">
    <location>
        <position position="126"/>
    </location>
    <ligand>
        <name>substrate</name>
    </ligand>
</feature>
<feature type="disulfide bond" description="Interchain (with C-218); in linked form" evidence="1">
    <location>
        <position position="49"/>
    </location>
</feature>
<feature type="disulfide bond" description="Alternate" evidence="1">
    <location>
        <begin position="212"/>
        <end position="218"/>
    </location>
</feature>
<feature type="disulfide bond" description="Interchain (with C-49); in linked form" evidence="1">
    <location>
        <position position="218"/>
    </location>
</feature>
<feature type="strand" evidence="2">
    <location>
        <begin position="16"/>
        <end position="20"/>
    </location>
</feature>
<feature type="strand" evidence="2">
    <location>
        <begin position="25"/>
        <end position="27"/>
    </location>
</feature>
<feature type="helix" evidence="2">
    <location>
        <begin position="29"/>
        <end position="31"/>
    </location>
</feature>
<feature type="strand" evidence="2">
    <location>
        <begin position="34"/>
        <end position="39"/>
    </location>
</feature>
<feature type="helix" evidence="2">
    <location>
        <begin position="47"/>
        <end position="58"/>
    </location>
</feature>
<feature type="helix" evidence="2">
    <location>
        <begin position="60"/>
        <end position="64"/>
    </location>
</feature>
<feature type="turn" evidence="2">
    <location>
        <begin position="65"/>
        <end position="67"/>
    </location>
</feature>
<feature type="strand" evidence="2">
    <location>
        <begin position="68"/>
        <end position="76"/>
    </location>
</feature>
<feature type="helix" evidence="2">
    <location>
        <begin position="78"/>
        <end position="92"/>
    </location>
</feature>
<feature type="strand" evidence="2">
    <location>
        <begin position="100"/>
        <end position="102"/>
    </location>
</feature>
<feature type="helix" evidence="2">
    <location>
        <begin position="107"/>
        <end position="111"/>
    </location>
</feature>
<feature type="turn" evidence="2">
    <location>
        <begin position="117"/>
        <end position="119"/>
    </location>
</feature>
<feature type="strand" evidence="2">
    <location>
        <begin position="121"/>
        <end position="123"/>
    </location>
</feature>
<feature type="strand" evidence="2">
    <location>
        <begin position="126"/>
        <end position="131"/>
    </location>
</feature>
<feature type="strand" evidence="2">
    <location>
        <begin position="135"/>
        <end position="143"/>
    </location>
</feature>
<feature type="helix" evidence="2">
    <location>
        <begin position="151"/>
        <end position="167"/>
    </location>
</feature>
<feature type="strand" evidence="2">
    <location>
        <begin position="180"/>
        <end position="184"/>
    </location>
</feature>
<feature type="helix" evidence="2">
    <location>
        <begin position="186"/>
        <end position="189"/>
    </location>
</feature>
<feature type="helix" evidence="2">
    <location>
        <begin position="199"/>
        <end position="205"/>
    </location>
</feature>
<feature type="strand" evidence="2">
    <location>
        <begin position="208"/>
        <end position="214"/>
    </location>
</feature>
<feature type="strand" evidence="2">
    <location>
        <begin position="217"/>
        <end position="220"/>
    </location>
</feature>
<keyword id="KW-0002">3D-structure</keyword>
<keyword id="KW-0049">Antioxidant</keyword>
<keyword id="KW-0963">Cytoplasm</keyword>
<keyword id="KW-1015">Disulfide bond</keyword>
<keyword id="KW-0560">Oxidoreductase</keyword>
<keyword id="KW-0575">Peroxidase</keyword>
<keyword id="KW-0676">Redox-active center</keyword>
<keyword id="KW-1185">Reference proteome</keyword>
<dbReference type="EC" id="1.11.1.24" evidence="1"/>
<dbReference type="EMBL" id="AE000657">
    <property type="protein sequence ID" value="AAC06986.1"/>
    <property type="molecule type" value="Genomic_DNA"/>
</dbReference>
<dbReference type="PIR" id="E70374">
    <property type="entry name" value="E70374"/>
</dbReference>
<dbReference type="RefSeq" id="NP_213585.1">
    <property type="nucleotide sequence ID" value="NC_000918.1"/>
</dbReference>
<dbReference type="RefSeq" id="WP_010880523.1">
    <property type="nucleotide sequence ID" value="NC_000918.1"/>
</dbReference>
<dbReference type="PDB" id="5OVQ">
    <property type="method" value="X-ray"/>
    <property type="resolution" value="1.80 A"/>
    <property type="chains" value="A/B/C/D/E/F/G/H/I/J/K/L=1-222"/>
</dbReference>
<dbReference type="PDBsum" id="5OVQ"/>
<dbReference type="SMR" id="O67024"/>
<dbReference type="STRING" id="224324.aq_858"/>
<dbReference type="EnsemblBacteria" id="AAC06986">
    <property type="protein sequence ID" value="AAC06986"/>
    <property type="gene ID" value="aq_858"/>
</dbReference>
<dbReference type="KEGG" id="aae:aq_858"/>
<dbReference type="PATRIC" id="fig|224324.8.peg.673"/>
<dbReference type="eggNOG" id="COG0450">
    <property type="taxonomic scope" value="Bacteria"/>
</dbReference>
<dbReference type="HOGENOM" id="CLU_042529_4_4_0"/>
<dbReference type="InParanoid" id="O67024"/>
<dbReference type="OrthoDB" id="9812811at2"/>
<dbReference type="Proteomes" id="UP000000798">
    <property type="component" value="Chromosome"/>
</dbReference>
<dbReference type="GO" id="GO:0005829">
    <property type="term" value="C:cytosol"/>
    <property type="evidence" value="ECO:0000318"/>
    <property type="project" value="GO_Central"/>
</dbReference>
<dbReference type="GO" id="GO:0004601">
    <property type="term" value="F:peroxidase activity"/>
    <property type="evidence" value="ECO:0000318"/>
    <property type="project" value="GO_Central"/>
</dbReference>
<dbReference type="GO" id="GO:0140824">
    <property type="term" value="F:thioredoxin-dependent peroxiredoxin activity"/>
    <property type="evidence" value="ECO:0007669"/>
    <property type="project" value="UniProtKB-EC"/>
</dbReference>
<dbReference type="GO" id="GO:0045454">
    <property type="term" value="P:cell redox homeostasis"/>
    <property type="evidence" value="ECO:0000318"/>
    <property type="project" value="GO_Central"/>
</dbReference>
<dbReference type="CDD" id="cd03016">
    <property type="entry name" value="PRX_1cys"/>
    <property type="match status" value="1"/>
</dbReference>
<dbReference type="FunFam" id="3.30.1020.10:FF:000002">
    <property type="entry name" value="Peroxiredoxin"/>
    <property type="match status" value="1"/>
</dbReference>
<dbReference type="FunFam" id="3.40.30.10:FF:000011">
    <property type="entry name" value="Peroxiredoxin PRX1"/>
    <property type="match status" value="1"/>
</dbReference>
<dbReference type="Gene3D" id="3.30.1020.10">
    <property type="entry name" value="Antioxidant, Horf6, Chain A, domain2"/>
    <property type="match status" value="1"/>
</dbReference>
<dbReference type="Gene3D" id="3.40.30.10">
    <property type="entry name" value="Glutaredoxin"/>
    <property type="match status" value="1"/>
</dbReference>
<dbReference type="HAMAP" id="MF_00401">
    <property type="entry name" value="Peroxiredoxin"/>
    <property type="match status" value="1"/>
</dbReference>
<dbReference type="InterPro" id="IPR000866">
    <property type="entry name" value="AhpC/TSA"/>
</dbReference>
<dbReference type="InterPro" id="IPR050217">
    <property type="entry name" value="Peroxiredoxin"/>
</dbReference>
<dbReference type="InterPro" id="IPR024706">
    <property type="entry name" value="Peroxiredoxin_AhpC-typ"/>
</dbReference>
<dbReference type="InterPro" id="IPR019479">
    <property type="entry name" value="Peroxiredoxin_C"/>
</dbReference>
<dbReference type="InterPro" id="IPR022915">
    <property type="entry name" value="Peroxiredoxin_TDXH"/>
</dbReference>
<dbReference type="InterPro" id="IPR045020">
    <property type="entry name" value="PRX_1cys"/>
</dbReference>
<dbReference type="InterPro" id="IPR036249">
    <property type="entry name" value="Thioredoxin-like_sf"/>
</dbReference>
<dbReference type="InterPro" id="IPR013766">
    <property type="entry name" value="Thioredoxin_domain"/>
</dbReference>
<dbReference type="NCBIfam" id="NF009668">
    <property type="entry name" value="PRK13189.1"/>
    <property type="match status" value="1"/>
</dbReference>
<dbReference type="PANTHER" id="PTHR10681">
    <property type="entry name" value="THIOREDOXIN PEROXIDASE"/>
    <property type="match status" value="1"/>
</dbReference>
<dbReference type="PANTHER" id="PTHR10681:SF128">
    <property type="entry name" value="THIOREDOXIN-DEPENDENT PEROXIDE REDUCTASE, MITOCHONDRIAL"/>
    <property type="match status" value="1"/>
</dbReference>
<dbReference type="Pfam" id="PF10417">
    <property type="entry name" value="1-cysPrx_C"/>
    <property type="match status" value="1"/>
</dbReference>
<dbReference type="Pfam" id="PF00578">
    <property type="entry name" value="AhpC-TSA"/>
    <property type="match status" value="1"/>
</dbReference>
<dbReference type="PIRSF" id="PIRSF000239">
    <property type="entry name" value="AHPC"/>
    <property type="match status" value="1"/>
</dbReference>
<dbReference type="SUPFAM" id="SSF52833">
    <property type="entry name" value="Thioredoxin-like"/>
    <property type="match status" value="1"/>
</dbReference>
<dbReference type="PROSITE" id="PS51352">
    <property type="entry name" value="THIOREDOXIN_2"/>
    <property type="match status" value="1"/>
</dbReference>
<organism>
    <name type="scientific">Aquifex aeolicus (strain VF5)</name>
    <dbReference type="NCBI Taxonomy" id="224324"/>
    <lineage>
        <taxon>Bacteria</taxon>
        <taxon>Pseudomonadati</taxon>
        <taxon>Aquificota</taxon>
        <taxon>Aquificia</taxon>
        <taxon>Aquificales</taxon>
        <taxon>Aquificaceae</taxon>
        <taxon>Aquifex</taxon>
    </lineage>
</organism>
<gene>
    <name type="ordered locus">aq_858</name>
</gene>
<sequence length="222" mass="25308">MEVVSLPRLGEPAPAFEAQTTFGPVKFPDDFKGQWVVLFSHPADFTPVCTTEFVAFAKNYEEFKKRNVQLIGLSVDSNFSHIAWVMNIKEKFGIEIPFPIIADHNMEVAKKYGMIHPAQSTTFTVRALFVIDDKGILRAMIYYPLTTGRNIREVIRLVDALQTADREGVATPADWVPEPQTWEFTEENTKVIVPPPTTYEDAVKRLQEGYECADWYICKKKV</sequence>
<evidence type="ECO:0000255" key="1">
    <source>
        <dbReference type="HAMAP-Rule" id="MF_00401"/>
    </source>
</evidence>
<evidence type="ECO:0007829" key="2">
    <source>
        <dbReference type="PDB" id="5OVQ"/>
    </source>
</evidence>
<protein>
    <recommendedName>
        <fullName evidence="1">Peroxiredoxin</fullName>
        <ecNumber evidence="1">1.11.1.24</ecNumber>
    </recommendedName>
    <alternativeName>
        <fullName evidence="1">Thioredoxin peroxidase</fullName>
    </alternativeName>
    <alternativeName>
        <fullName evidence="1">Thioredoxin-dependent peroxiredoxin</fullName>
    </alternativeName>
</protein>
<proteinExistence type="evidence at protein level"/>
<comment type="function">
    <text evidence="1">Thiol-specific peroxidase that catalyzes the reduction of hydrogen peroxide and organic hydroperoxides to water and alcohols, respectively. Plays a role in cell protection against oxidative stress by detoxifying peroxides.</text>
</comment>
<comment type="catalytic activity">
    <reaction evidence="1">
        <text>a hydroperoxide + [thioredoxin]-dithiol = an alcohol + [thioredoxin]-disulfide + H2O</text>
        <dbReference type="Rhea" id="RHEA:62620"/>
        <dbReference type="Rhea" id="RHEA-COMP:10698"/>
        <dbReference type="Rhea" id="RHEA-COMP:10700"/>
        <dbReference type="ChEBI" id="CHEBI:15377"/>
        <dbReference type="ChEBI" id="CHEBI:29950"/>
        <dbReference type="ChEBI" id="CHEBI:30879"/>
        <dbReference type="ChEBI" id="CHEBI:35924"/>
        <dbReference type="ChEBI" id="CHEBI:50058"/>
        <dbReference type="EC" id="1.11.1.24"/>
    </reaction>
</comment>
<comment type="subunit">
    <text evidence="1">Homodecamer. Pentamer of dimers that assemble into a ring structure.</text>
</comment>
<comment type="subcellular location">
    <subcellularLocation>
        <location evidence="1">Cytoplasm</location>
    </subcellularLocation>
</comment>
<comment type="miscellaneous">
    <text evidence="1">The active site is a conserved redox-active cysteine residue, the peroxidatic cysteine (C(P)), which makes the nucleophilic attack on the peroxide substrate. The peroxide oxidizes the C(P)-SH to cysteine sulfenic acid (C(P)-SOH), which then reacts with another cysteine residue, the resolving cysteine (C(R)), to form a disulfide bridge. The disulfide is subsequently reduced by an appropriate electron donor to complete the catalytic cycle. Although the primary sequence of this enzyme is similar to those of the 1-Cys Prx6 enzymes, its catalytic properties resemble those of the typical 2-Cys Prxs and C(R) is provided by the other dimeric subunit to form an intersubunit disulfide. The disulfide is subsequently reduced by thioredoxin.</text>
</comment>
<comment type="similarity">
    <text evidence="1">Belongs to the peroxiredoxin family. Prx6 subfamily.</text>
</comment>
<reference key="1">
    <citation type="journal article" date="1998" name="Nature">
        <title>The complete genome of the hyperthermophilic bacterium Aquifex aeolicus.</title>
        <authorList>
            <person name="Deckert G."/>
            <person name="Warren P.V."/>
            <person name="Gaasterland T."/>
            <person name="Young W.G."/>
            <person name="Lenox A.L."/>
            <person name="Graham D.E."/>
            <person name="Overbeek R."/>
            <person name="Snead M.A."/>
            <person name="Keller M."/>
            <person name="Aujay M."/>
            <person name="Huber R."/>
            <person name="Feldman R.A."/>
            <person name="Short J.M."/>
            <person name="Olsen G.J."/>
            <person name="Swanson R.V."/>
        </authorList>
    </citation>
    <scope>NUCLEOTIDE SEQUENCE [LARGE SCALE GENOMIC DNA]</scope>
    <source>
        <strain>VF5</strain>
    </source>
</reference>
<accession>O67024</accession>